<gene>
    <name evidence="1" type="primary">rpsS</name>
    <name type="ordered locus">BCAH820_0126</name>
</gene>
<feature type="chain" id="PRO_1000127926" description="Small ribosomal subunit protein uS19">
    <location>
        <begin position="1"/>
        <end position="92"/>
    </location>
</feature>
<evidence type="ECO:0000255" key="1">
    <source>
        <dbReference type="HAMAP-Rule" id="MF_00531"/>
    </source>
</evidence>
<evidence type="ECO:0000305" key="2"/>
<protein>
    <recommendedName>
        <fullName evidence="1">Small ribosomal subunit protein uS19</fullName>
    </recommendedName>
    <alternativeName>
        <fullName evidence="2">30S ribosomal protein S19</fullName>
    </alternativeName>
</protein>
<reference key="1">
    <citation type="submission" date="2008-10" db="EMBL/GenBank/DDBJ databases">
        <title>Genome sequence of Bacillus cereus AH820.</title>
        <authorList>
            <person name="Dodson R.J."/>
            <person name="Durkin A.S."/>
            <person name="Rosovitz M.J."/>
            <person name="Rasko D.A."/>
            <person name="Hoffmaster A."/>
            <person name="Ravel J."/>
            <person name="Sutton G."/>
        </authorList>
    </citation>
    <scope>NUCLEOTIDE SEQUENCE [LARGE SCALE GENOMIC DNA]</scope>
    <source>
        <strain>AH820</strain>
    </source>
</reference>
<keyword id="KW-0687">Ribonucleoprotein</keyword>
<keyword id="KW-0689">Ribosomal protein</keyword>
<keyword id="KW-0694">RNA-binding</keyword>
<keyword id="KW-0699">rRNA-binding</keyword>
<dbReference type="EMBL" id="CP001283">
    <property type="protein sequence ID" value="ACK89627.1"/>
    <property type="molecule type" value="Genomic_DNA"/>
</dbReference>
<dbReference type="RefSeq" id="WP_000124453.1">
    <property type="nucleotide sequence ID" value="NC_011773.1"/>
</dbReference>
<dbReference type="SMR" id="B7JKC3"/>
<dbReference type="GeneID" id="93010939"/>
<dbReference type="KEGG" id="bcu:BCAH820_0126"/>
<dbReference type="HOGENOM" id="CLU_144911_0_1_9"/>
<dbReference type="Proteomes" id="UP000001363">
    <property type="component" value="Chromosome"/>
</dbReference>
<dbReference type="GO" id="GO:0005737">
    <property type="term" value="C:cytoplasm"/>
    <property type="evidence" value="ECO:0007669"/>
    <property type="project" value="UniProtKB-ARBA"/>
</dbReference>
<dbReference type="GO" id="GO:0015935">
    <property type="term" value="C:small ribosomal subunit"/>
    <property type="evidence" value="ECO:0007669"/>
    <property type="project" value="InterPro"/>
</dbReference>
<dbReference type="GO" id="GO:0019843">
    <property type="term" value="F:rRNA binding"/>
    <property type="evidence" value="ECO:0007669"/>
    <property type="project" value="UniProtKB-UniRule"/>
</dbReference>
<dbReference type="GO" id="GO:0003735">
    <property type="term" value="F:structural constituent of ribosome"/>
    <property type="evidence" value="ECO:0007669"/>
    <property type="project" value="InterPro"/>
</dbReference>
<dbReference type="GO" id="GO:0000028">
    <property type="term" value="P:ribosomal small subunit assembly"/>
    <property type="evidence" value="ECO:0007669"/>
    <property type="project" value="TreeGrafter"/>
</dbReference>
<dbReference type="GO" id="GO:0006412">
    <property type="term" value="P:translation"/>
    <property type="evidence" value="ECO:0007669"/>
    <property type="project" value="UniProtKB-UniRule"/>
</dbReference>
<dbReference type="FunFam" id="3.30.860.10:FF:000001">
    <property type="entry name" value="30S ribosomal protein S19"/>
    <property type="match status" value="1"/>
</dbReference>
<dbReference type="Gene3D" id="3.30.860.10">
    <property type="entry name" value="30s Ribosomal Protein S19, Chain A"/>
    <property type="match status" value="1"/>
</dbReference>
<dbReference type="HAMAP" id="MF_00531">
    <property type="entry name" value="Ribosomal_uS19"/>
    <property type="match status" value="1"/>
</dbReference>
<dbReference type="InterPro" id="IPR002222">
    <property type="entry name" value="Ribosomal_uS19"/>
</dbReference>
<dbReference type="InterPro" id="IPR005732">
    <property type="entry name" value="Ribosomal_uS19_bac-type"/>
</dbReference>
<dbReference type="InterPro" id="IPR020934">
    <property type="entry name" value="Ribosomal_uS19_CS"/>
</dbReference>
<dbReference type="InterPro" id="IPR023575">
    <property type="entry name" value="Ribosomal_uS19_SF"/>
</dbReference>
<dbReference type="NCBIfam" id="TIGR01050">
    <property type="entry name" value="rpsS_bact"/>
    <property type="match status" value="1"/>
</dbReference>
<dbReference type="PANTHER" id="PTHR11880">
    <property type="entry name" value="RIBOSOMAL PROTEIN S19P FAMILY MEMBER"/>
    <property type="match status" value="1"/>
</dbReference>
<dbReference type="PANTHER" id="PTHR11880:SF8">
    <property type="entry name" value="SMALL RIBOSOMAL SUBUNIT PROTEIN US19M"/>
    <property type="match status" value="1"/>
</dbReference>
<dbReference type="Pfam" id="PF00203">
    <property type="entry name" value="Ribosomal_S19"/>
    <property type="match status" value="1"/>
</dbReference>
<dbReference type="PIRSF" id="PIRSF002144">
    <property type="entry name" value="Ribosomal_S19"/>
    <property type="match status" value="1"/>
</dbReference>
<dbReference type="PRINTS" id="PR00975">
    <property type="entry name" value="RIBOSOMALS19"/>
</dbReference>
<dbReference type="SUPFAM" id="SSF54570">
    <property type="entry name" value="Ribosomal protein S19"/>
    <property type="match status" value="1"/>
</dbReference>
<dbReference type="PROSITE" id="PS00323">
    <property type="entry name" value="RIBOSOMAL_S19"/>
    <property type="match status" value="1"/>
</dbReference>
<proteinExistence type="inferred from homology"/>
<comment type="function">
    <text evidence="1">Protein S19 forms a complex with S13 that binds strongly to the 16S ribosomal RNA.</text>
</comment>
<comment type="similarity">
    <text evidence="1">Belongs to the universal ribosomal protein uS19 family.</text>
</comment>
<accession>B7JKC3</accession>
<organism>
    <name type="scientific">Bacillus cereus (strain AH820)</name>
    <dbReference type="NCBI Taxonomy" id="405535"/>
    <lineage>
        <taxon>Bacteria</taxon>
        <taxon>Bacillati</taxon>
        <taxon>Bacillota</taxon>
        <taxon>Bacilli</taxon>
        <taxon>Bacillales</taxon>
        <taxon>Bacillaceae</taxon>
        <taxon>Bacillus</taxon>
        <taxon>Bacillus cereus group</taxon>
    </lineage>
</organism>
<name>RS19_BACC0</name>
<sequence>MARSLKKGPFVDDHLMSKIAKLNETEQKQVVKTWSRRSTIFPQFIGHTIAVYDGRKHVPVYVTEDMVGHKLGEFAPTRTYKGHDADDKKTRR</sequence>